<name>TILS_STRZP</name>
<dbReference type="EC" id="6.3.4.19" evidence="1"/>
<dbReference type="EMBL" id="CP000920">
    <property type="protein sequence ID" value="ACO21994.1"/>
    <property type="molecule type" value="Genomic_DNA"/>
</dbReference>
<dbReference type="RefSeq" id="WP_001208983.1">
    <property type="nucleotide sequence ID" value="NC_012467.1"/>
</dbReference>
<dbReference type="SMR" id="C1CN76"/>
<dbReference type="GeneID" id="45652526"/>
<dbReference type="KEGG" id="spp:SPP_0011"/>
<dbReference type="HOGENOM" id="CLU_018869_0_2_9"/>
<dbReference type="GO" id="GO:0005737">
    <property type="term" value="C:cytoplasm"/>
    <property type="evidence" value="ECO:0007669"/>
    <property type="project" value="UniProtKB-SubCell"/>
</dbReference>
<dbReference type="GO" id="GO:0005524">
    <property type="term" value="F:ATP binding"/>
    <property type="evidence" value="ECO:0007669"/>
    <property type="project" value="UniProtKB-UniRule"/>
</dbReference>
<dbReference type="GO" id="GO:0032267">
    <property type="term" value="F:tRNA(Ile)-lysidine synthase activity"/>
    <property type="evidence" value="ECO:0007669"/>
    <property type="project" value="UniProtKB-EC"/>
</dbReference>
<dbReference type="GO" id="GO:0006400">
    <property type="term" value="P:tRNA modification"/>
    <property type="evidence" value="ECO:0007669"/>
    <property type="project" value="UniProtKB-UniRule"/>
</dbReference>
<dbReference type="CDD" id="cd01992">
    <property type="entry name" value="TilS_N"/>
    <property type="match status" value="1"/>
</dbReference>
<dbReference type="Gene3D" id="3.40.50.620">
    <property type="entry name" value="HUPs"/>
    <property type="match status" value="1"/>
</dbReference>
<dbReference type="HAMAP" id="MF_01161">
    <property type="entry name" value="tRNA_Ile_lys_synt"/>
    <property type="match status" value="1"/>
</dbReference>
<dbReference type="InterPro" id="IPR012796">
    <property type="entry name" value="Lysidine-tRNA-synth_C"/>
</dbReference>
<dbReference type="InterPro" id="IPR014729">
    <property type="entry name" value="Rossmann-like_a/b/a_fold"/>
</dbReference>
<dbReference type="InterPro" id="IPR011063">
    <property type="entry name" value="TilS/TtcA_N"/>
</dbReference>
<dbReference type="InterPro" id="IPR012094">
    <property type="entry name" value="tRNA_Ile_lys_synt"/>
</dbReference>
<dbReference type="InterPro" id="IPR012795">
    <property type="entry name" value="tRNA_Ile_lys_synt_N"/>
</dbReference>
<dbReference type="NCBIfam" id="TIGR02433">
    <property type="entry name" value="lysidine_TilS_C"/>
    <property type="match status" value="1"/>
</dbReference>
<dbReference type="NCBIfam" id="TIGR02432">
    <property type="entry name" value="lysidine_TilS_N"/>
    <property type="match status" value="1"/>
</dbReference>
<dbReference type="PANTHER" id="PTHR43033">
    <property type="entry name" value="TRNA(ILE)-LYSIDINE SYNTHASE-RELATED"/>
    <property type="match status" value="1"/>
</dbReference>
<dbReference type="PANTHER" id="PTHR43033:SF1">
    <property type="entry name" value="TRNA(ILE)-LYSIDINE SYNTHASE-RELATED"/>
    <property type="match status" value="1"/>
</dbReference>
<dbReference type="Pfam" id="PF01171">
    <property type="entry name" value="ATP_bind_3"/>
    <property type="match status" value="1"/>
</dbReference>
<dbReference type="Pfam" id="PF11734">
    <property type="entry name" value="TilS_C"/>
    <property type="match status" value="1"/>
</dbReference>
<dbReference type="SMART" id="SM00977">
    <property type="entry name" value="TilS_C"/>
    <property type="match status" value="1"/>
</dbReference>
<dbReference type="SUPFAM" id="SSF52402">
    <property type="entry name" value="Adenine nucleotide alpha hydrolases-like"/>
    <property type="match status" value="1"/>
</dbReference>
<dbReference type="SUPFAM" id="SSF56037">
    <property type="entry name" value="PheT/TilS domain"/>
    <property type="match status" value="1"/>
</dbReference>
<protein>
    <recommendedName>
        <fullName evidence="1">tRNA(Ile)-lysidine synthase</fullName>
        <ecNumber evidence="1">6.3.4.19</ecNumber>
    </recommendedName>
    <alternativeName>
        <fullName evidence="1">tRNA(Ile)-2-lysyl-cytidine synthase</fullName>
    </alternativeName>
    <alternativeName>
        <fullName evidence="1">tRNA(Ile)-lysidine synthetase</fullName>
    </alternativeName>
</protein>
<evidence type="ECO:0000255" key="1">
    <source>
        <dbReference type="HAMAP-Rule" id="MF_01161"/>
    </source>
</evidence>
<sequence>MREPDFLNHFLKKGYFKKHAKAVLALSGGLDSMFLFKVLSTYQKELEIELILAHVNHKQRIESDWEEKELRKLAAEAELPIYISNFSGEFSEARARNFRYDFFQEVMKKTGATALVTAHHADDQVETILMRLIRGTRLRYLSGIKEKQVVGEIEIIRPFLHFQKKDFPSIFHFEDTSNQENHYFRNRIRNSYLPELEKENPRFRDAILGIGNEILDYDLAIAELSNNINVEDLQQLFSYSESTQRVLLQTYLNRFPDLNLTKAQFAEVQQILKSKSQYRHPIKNGYELIKEYQQFQICKISPQADEEEDELVLHYQNQVAYQGYLFSFGLPLEGESIQQIPVSRETSIHIRHRKTGDVLIQNGHRKKLRRLFIDLKIPMEKRNSALIIEQFGEIVSILGIATNNLSKKTKNDIMNTVLYIEKIDR</sequence>
<reference key="1">
    <citation type="journal article" date="2010" name="Genome Biol.">
        <title>Structure and dynamics of the pan-genome of Streptococcus pneumoniae and closely related species.</title>
        <authorList>
            <person name="Donati C."/>
            <person name="Hiller N.L."/>
            <person name="Tettelin H."/>
            <person name="Muzzi A."/>
            <person name="Croucher N.J."/>
            <person name="Angiuoli S.V."/>
            <person name="Oggioni M."/>
            <person name="Dunning Hotopp J.C."/>
            <person name="Hu F.Z."/>
            <person name="Riley D.R."/>
            <person name="Covacci A."/>
            <person name="Mitchell T.J."/>
            <person name="Bentley S.D."/>
            <person name="Kilian M."/>
            <person name="Ehrlich G.D."/>
            <person name="Rappuoli R."/>
            <person name="Moxon E.R."/>
            <person name="Masignani V."/>
        </authorList>
    </citation>
    <scope>NUCLEOTIDE SEQUENCE [LARGE SCALE GENOMIC DNA]</scope>
    <source>
        <strain>P1031</strain>
    </source>
</reference>
<gene>
    <name evidence="1" type="primary">tilS</name>
    <name type="ordered locus">SPP_0011</name>
</gene>
<feature type="chain" id="PRO_1000164337" description="tRNA(Ile)-lysidine synthase">
    <location>
        <begin position="1"/>
        <end position="425"/>
    </location>
</feature>
<feature type="binding site" evidence="1">
    <location>
        <begin position="27"/>
        <end position="32"/>
    </location>
    <ligand>
        <name>ATP</name>
        <dbReference type="ChEBI" id="CHEBI:30616"/>
    </ligand>
</feature>
<proteinExistence type="inferred from homology"/>
<keyword id="KW-0067">ATP-binding</keyword>
<keyword id="KW-0963">Cytoplasm</keyword>
<keyword id="KW-0436">Ligase</keyword>
<keyword id="KW-0547">Nucleotide-binding</keyword>
<keyword id="KW-0819">tRNA processing</keyword>
<organism>
    <name type="scientific">Streptococcus pneumoniae (strain P1031)</name>
    <dbReference type="NCBI Taxonomy" id="488223"/>
    <lineage>
        <taxon>Bacteria</taxon>
        <taxon>Bacillati</taxon>
        <taxon>Bacillota</taxon>
        <taxon>Bacilli</taxon>
        <taxon>Lactobacillales</taxon>
        <taxon>Streptococcaceae</taxon>
        <taxon>Streptococcus</taxon>
    </lineage>
</organism>
<comment type="function">
    <text evidence="1">Ligates lysine onto the cytidine present at position 34 of the AUA codon-specific tRNA(Ile) that contains the anticodon CAU, in an ATP-dependent manner. Cytidine is converted to lysidine, thus changing the amino acid specificity of the tRNA from methionine to isoleucine.</text>
</comment>
<comment type="catalytic activity">
    <reaction evidence="1">
        <text>cytidine(34) in tRNA(Ile2) + L-lysine + ATP = lysidine(34) in tRNA(Ile2) + AMP + diphosphate + H(+)</text>
        <dbReference type="Rhea" id="RHEA:43744"/>
        <dbReference type="Rhea" id="RHEA-COMP:10625"/>
        <dbReference type="Rhea" id="RHEA-COMP:10670"/>
        <dbReference type="ChEBI" id="CHEBI:15378"/>
        <dbReference type="ChEBI" id="CHEBI:30616"/>
        <dbReference type="ChEBI" id="CHEBI:32551"/>
        <dbReference type="ChEBI" id="CHEBI:33019"/>
        <dbReference type="ChEBI" id="CHEBI:82748"/>
        <dbReference type="ChEBI" id="CHEBI:83665"/>
        <dbReference type="ChEBI" id="CHEBI:456215"/>
        <dbReference type="EC" id="6.3.4.19"/>
    </reaction>
</comment>
<comment type="subcellular location">
    <subcellularLocation>
        <location evidence="1">Cytoplasm</location>
    </subcellularLocation>
</comment>
<comment type="domain">
    <text>The N-terminal region contains the highly conserved SGGXDS motif, predicted to be a P-loop motif involved in ATP binding.</text>
</comment>
<comment type="similarity">
    <text evidence="1">Belongs to the tRNA(Ile)-lysidine synthase family.</text>
</comment>
<accession>C1CN76</accession>